<reference key="1">
    <citation type="journal article" date="1993" name="FEBS Lett.">
        <title>The structure of neutrophil defensin genes.</title>
        <authorList>
            <person name="Linzmeier R."/>
            <person name="Michaelson D."/>
            <person name="Liu L."/>
            <person name="Ganz T."/>
        </authorList>
    </citation>
    <scope>NUCLEOTIDE SEQUENCE [GENOMIC DNA / MRNA]</scope>
</reference>
<reference key="2">
    <citation type="journal article" date="1985" name="J. Biol. Chem.">
        <title>Primary structures of six antimicrobial peptides of rabbit peritoneal neutrophils.</title>
        <authorList>
            <person name="Selsted M.E."/>
            <person name="Brown D.M."/>
            <person name="Delange R.J."/>
            <person name="Harwig S.S.L."/>
            <person name="Lehrer R.I."/>
        </authorList>
    </citation>
    <scope>PROTEIN SEQUENCE OF 60-93</scope>
    <source>
        <tissue>Peritoneal neutrophil</tissue>
    </source>
</reference>
<reference key="3">
    <citation type="journal article" date="1988" name="Proc. Natl. Acad. Sci. U.S.A.">
        <title>Isolation and structure of corticostatin peptides from rabbit fetal and adult lung.</title>
        <authorList>
            <person name="Zhu Q."/>
            <person name="Hu J."/>
            <person name="Esch F."/>
            <person name="Shimasaki S."/>
            <person name="Solomon S."/>
        </authorList>
    </citation>
    <scope>PROTEIN SEQUENCE OF 60-93</scope>
    <source>
        <tissue>Lung</tissue>
    </source>
</reference>
<reference key="4">
    <citation type="journal article" date="1992" name="Endocrinology">
        <title>Isolation and mode of action of rabbit corticostatic (antiadrenocorticotropin) peptides.</title>
        <authorList>
            <person name="Zhu Q."/>
            <person name="Solomon S."/>
        </authorList>
    </citation>
    <scope>PROTEIN SEQUENCE OF 60-93</scope>
    <source>
        <tissue>Lung</tissue>
    </source>
</reference>
<sequence>MRTLILLAAILLAALQAQAELFSVNVDEVLDQQQPGSDQDLVIHLTGEESSALQVPDTKGICACRRRFCPNSERFSGYCRVNGARYVRCCSRR</sequence>
<keyword id="KW-0044">Antibiotic</keyword>
<keyword id="KW-0929">Antimicrobial</keyword>
<keyword id="KW-0211">Defensin</keyword>
<keyword id="KW-0903">Direct protein sequencing</keyword>
<keyword id="KW-1015">Disulfide bond</keyword>
<keyword id="KW-1185">Reference proteome</keyword>
<keyword id="KW-0964">Secreted</keyword>
<keyword id="KW-0732">Signal</keyword>
<feature type="signal peptide" evidence="2">
    <location>
        <begin position="1"/>
        <end position="19"/>
    </location>
</feature>
<feature type="propeptide" id="PRO_0000006807" evidence="3 4 5">
    <location>
        <begin position="20"/>
        <end position="59"/>
    </location>
</feature>
<feature type="peptide" id="PRO_0000006808" description="Corticostatin 1">
    <location>
        <begin position="60"/>
        <end position="93"/>
    </location>
</feature>
<feature type="disulfide bond" evidence="1">
    <location>
        <begin position="62"/>
        <end position="90"/>
    </location>
</feature>
<feature type="disulfide bond" evidence="1">
    <location>
        <begin position="64"/>
        <end position="79"/>
    </location>
</feature>
<feature type="disulfide bond" evidence="1">
    <location>
        <begin position="69"/>
        <end position="89"/>
    </location>
</feature>
<evidence type="ECO:0000250" key="1"/>
<evidence type="ECO:0000255" key="2"/>
<evidence type="ECO:0000269" key="3">
    <source>
    </source>
</evidence>
<evidence type="ECO:0000269" key="4">
    <source>
    </source>
</evidence>
<evidence type="ECO:0000269" key="5">
    <source>
    </source>
</evidence>
<evidence type="ECO:0000305" key="6"/>
<name>DEF1_RABIT</name>
<proteinExistence type="evidence at protein level"/>
<accession>P07469</accession>
<dbReference type="EMBL" id="M64599">
    <property type="protein sequence ID" value="AAA31236.1"/>
    <property type="molecule type" value="Genomic_DNA"/>
</dbReference>
<dbReference type="EMBL" id="M64600">
    <property type="protein sequence ID" value="AAA31237.1"/>
    <property type="molecule type" value="mRNA"/>
</dbReference>
<dbReference type="PIR" id="S32553">
    <property type="entry name" value="S32553"/>
</dbReference>
<dbReference type="RefSeq" id="NP_001075767.1">
    <property type="nucleotide sequence ID" value="NM_001082298.1"/>
</dbReference>
<dbReference type="SMR" id="P07469"/>
<dbReference type="STRING" id="9986.ENSOCUP00000045848"/>
<dbReference type="PaxDb" id="9986-ENSOCUP00000025608"/>
<dbReference type="GeneID" id="100009134"/>
<dbReference type="KEGG" id="ocu:100009134"/>
<dbReference type="InParanoid" id="P07469"/>
<dbReference type="OrthoDB" id="9837636at2759"/>
<dbReference type="Proteomes" id="UP000001811">
    <property type="component" value="Unplaced"/>
</dbReference>
<dbReference type="GO" id="GO:0031012">
    <property type="term" value="C:extracellular matrix"/>
    <property type="evidence" value="ECO:0007669"/>
    <property type="project" value="TreeGrafter"/>
</dbReference>
<dbReference type="GO" id="GO:0005615">
    <property type="term" value="C:extracellular space"/>
    <property type="evidence" value="ECO:0007669"/>
    <property type="project" value="InterPro"/>
</dbReference>
<dbReference type="GO" id="GO:0019731">
    <property type="term" value="P:antibacterial humoral response"/>
    <property type="evidence" value="ECO:0007669"/>
    <property type="project" value="TreeGrafter"/>
</dbReference>
<dbReference type="GO" id="GO:0061844">
    <property type="term" value="P:antimicrobial humoral immune response mediated by antimicrobial peptide"/>
    <property type="evidence" value="ECO:0007669"/>
    <property type="project" value="TreeGrafter"/>
</dbReference>
<dbReference type="GO" id="GO:0071222">
    <property type="term" value="P:cellular response to lipopolysaccharide"/>
    <property type="evidence" value="ECO:0007669"/>
    <property type="project" value="TreeGrafter"/>
</dbReference>
<dbReference type="GO" id="GO:0050829">
    <property type="term" value="P:defense response to Gram-negative bacterium"/>
    <property type="evidence" value="ECO:0007669"/>
    <property type="project" value="TreeGrafter"/>
</dbReference>
<dbReference type="GO" id="GO:0050830">
    <property type="term" value="P:defense response to Gram-positive bacterium"/>
    <property type="evidence" value="ECO:0007669"/>
    <property type="project" value="TreeGrafter"/>
</dbReference>
<dbReference type="GO" id="GO:0051673">
    <property type="term" value="P:disruption of plasma membrane integrity in another organism"/>
    <property type="evidence" value="ECO:0007669"/>
    <property type="project" value="TreeGrafter"/>
</dbReference>
<dbReference type="GO" id="GO:0002227">
    <property type="term" value="P:innate immune response in mucosa"/>
    <property type="evidence" value="ECO:0007669"/>
    <property type="project" value="TreeGrafter"/>
</dbReference>
<dbReference type="InterPro" id="IPR016327">
    <property type="entry name" value="Alpha-defensin"/>
</dbReference>
<dbReference type="InterPro" id="IPR006081">
    <property type="entry name" value="Alpha-defensin_C"/>
</dbReference>
<dbReference type="InterPro" id="IPR002366">
    <property type="entry name" value="Alpha-defensin_N"/>
</dbReference>
<dbReference type="InterPro" id="IPR006080">
    <property type="entry name" value="Beta/alpha-defensin_C"/>
</dbReference>
<dbReference type="PANTHER" id="PTHR11876">
    <property type="entry name" value="ALPHA-DEFENSIN 1"/>
    <property type="match status" value="1"/>
</dbReference>
<dbReference type="PANTHER" id="PTHR11876:SF28">
    <property type="entry name" value="ALPHA-DEFENSIN 1"/>
    <property type="match status" value="1"/>
</dbReference>
<dbReference type="Pfam" id="PF00323">
    <property type="entry name" value="Defensin_1"/>
    <property type="match status" value="1"/>
</dbReference>
<dbReference type="Pfam" id="PF00879">
    <property type="entry name" value="Defensin_propep"/>
    <property type="match status" value="1"/>
</dbReference>
<dbReference type="PIRSF" id="PIRSF001875">
    <property type="entry name" value="Alpha-defensin"/>
    <property type="match status" value="1"/>
</dbReference>
<dbReference type="SMART" id="SM01418">
    <property type="entry name" value="Defensin_propep"/>
    <property type="match status" value="1"/>
</dbReference>
<dbReference type="SMART" id="SM00048">
    <property type="entry name" value="DEFSN"/>
    <property type="match status" value="1"/>
</dbReference>
<dbReference type="PROSITE" id="PS00269">
    <property type="entry name" value="DEFENSIN"/>
    <property type="match status" value="1"/>
</dbReference>
<organism>
    <name type="scientific">Oryctolagus cuniculus</name>
    <name type="common">Rabbit</name>
    <dbReference type="NCBI Taxonomy" id="9986"/>
    <lineage>
        <taxon>Eukaryota</taxon>
        <taxon>Metazoa</taxon>
        <taxon>Chordata</taxon>
        <taxon>Craniata</taxon>
        <taxon>Vertebrata</taxon>
        <taxon>Euteleostomi</taxon>
        <taxon>Mammalia</taxon>
        <taxon>Eutheria</taxon>
        <taxon>Euarchontoglires</taxon>
        <taxon>Glires</taxon>
        <taxon>Lagomorpha</taxon>
        <taxon>Leporidae</taxon>
        <taxon>Oryctolagus</taxon>
    </lineage>
</organism>
<protein>
    <recommendedName>
        <fullName>Corticostatin 1</fullName>
    </recommendedName>
    <alternativeName>
        <fullName>Antiadrenocorticotropin peptide I</fullName>
    </alternativeName>
    <alternativeName>
        <fullName>Corticostatin I</fullName>
        <shortName>CS-I</shortName>
    </alternativeName>
    <alternativeName>
        <fullName>Microbicidal peptide NP-3A</fullName>
    </alternativeName>
    <alternativeName>
        <fullName>Neutrophil antibiotic peptide NP-3A</fullName>
    </alternativeName>
</protein>
<comment type="function">
    <text>Microbicidal activity and inhibits corticotropin (ACTH) stimulated corticosterone production.</text>
</comment>
<comment type="subcellular location">
    <subcellularLocation>
        <location>Secreted</location>
    </subcellularLocation>
</comment>
<comment type="similarity">
    <text evidence="6">Belongs to the alpha-defensin family.</text>
</comment>